<name>PPNP_ECOSM</name>
<gene>
    <name evidence="1" type="primary">ppnP</name>
    <name type="ordered locus">EcSMS35_0421</name>
</gene>
<accession>B1LIS5</accession>
<proteinExistence type="inferred from homology"/>
<keyword id="KW-0328">Glycosyltransferase</keyword>
<keyword id="KW-0808">Transferase</keyword>
<organism>
    <name type="scientific">Escherichia coli (strain SMS-3-5 / SECEC)</name>
    <dbReference type="NCBI Taxonomy" id="439855"/>
    <lineage>
        <taxon>Bacteria</taxon>
        <taxon>Pseudomonadati</taxon>
        <taxon>Pseudomonadota</taxon>
        <taxon>Gammaproteobacteria</taxon>
        <taxon>Enterobacterales</taxon>
        <taxon>Enterobacteriaceae</taxon>
        <taxon>Escherichia</taxon>
    </lineage>
</organism>
<reference key="1">
    <citation type="journal article" date="2008" name="J. Bacteriol.">
        <title>Insights into the environmental resistance gene pool from the genome sequence of the multidrug-resistant environmental isolate Escherichia coli SMS-3-5.</title>
        <authorList>
            <person name="Fricke W.F."/>
            <person name="Wright M.S."/>
            <person name="Lindell A.H."/>
            <person name="Harkins D.M."/>
            <person name="Baker-Austin C."/>
            <person name="Ravel J."/>
            <person name="Stepanauskas R."/>
        </authorList>
    </citation>
    <scope>NUCLEOTIDE SEQUENCE [LARGE SCALE GENOMIC DNA]</scope>
    <source>
        <strain>SMS-3-5 / SECEC</strain>
    </source>
</reference>
<comment type="function">
    <text evidence="1">Catalyzes the phosphorolysis of diverse nucleosides, yielding D-ribose 1-phosphate and the respective free bases. Can use uridine, adenosine, guanosine, cytidine, thymidine, inosine and xanthosine as substrates. Also catalyzes the reverse reactions.</text>
</comment>
<comment type="catalytic activity">
    <reaction evidence="1">
        <text>a purine D-ribonucleoside + phosphate = a purine nucleobase + alpha-D-ribose 1-phosphate</text>
        <dbReference type="Rhea" id="RHEA:19805"/>
        <dbReference type="ChEBI" id="CHEBI:26386"/>
        <dbReference type="ChEBI" id="CHEBI:43474"/>
        <dbReference type="ChEBI" id="CHEBI:57720"/>
        <dbReference type="ChEBI" id="CHEBI:142355"/>
        <dbReference type="EC" id="2.4.2.1"/>
    </reaction>
</comment>
<comment type="catalytic activity">
    <reaction evidence="1">
        <text>adenosine + phosphate = alpha-D-ribose 1-phosphate + adenine</text>
        <dbReference type="Rhea" id="RHEA:27642"/>
        <dbReference type="ChEBI" id="CHEBI:16335"/>
        <dbReference type="ChEBI" id="CHEBI:16708"/>
        <dbReference type="ChEBI" id="CHEBI:43474"/>
        <dbReference type="ChEBI" id="CHEBI:57720"/>
        <dbReference type="EC" id="2.4.2.1"/>
    </reaction>
</comment>
<comment type="catalytic activity">
    <reaction evidence="1">
        <text>cytidine + phosphate = cytosine + alpha-D-ribose 1-phosphate</text>
        <dbReference type="Rhea" id="RHEA:52540"/>
        <dbReference type="ChEBI" id="CHEBI:16040"/>
        <dbReference type="ChEBI" id="CHEBI:17562"/>
        <dbReference type="ChEBI" id="CHEBI:43474"/>
        <dbReference type="ChEBI" id="CHEBI:57720"/>
        <dbReference type="EC" id="2.4.2.2"/>
    </reaction>
</comment>
<comment type="catalytic activity">
    <reaction evidence="1">
        <text>guanosine + phosphate = alpha-D-ribose 1-phosphate + guanine</text>
        <dbReference type="Rhea" id="RHEA:13233"/>
        <dbReference type="ChEBI" id="CHEBI:16235"/>
        <dbReference type="ChEBI" id="CHEBI:16750"/>
        <dbReference type="ChEBI" id="CHEBI:43474"/>
        <dbReference type="ChEBI" id="CHEBI:57720"/>
        <dbReference type="EC" id="2.4.2.1"/>
    </reaction>
</comment>
<comment type="catalytic activity">
    <reaction evidence="1">
        <text>inosine + phosphate = alpha-D-ribose 1-phosphate + hypoxanthine</text>
        <dbReference type="Rhea" id="RHEA:27646"/>
        <dbReference type="ChEBI" id="CHEBI:17368"/>
        <dbReference type="ChEBI" id="CHEBI:17596"/>
        <dbReference type="ChEBI" id="CHEBI:43474"/>
        <dbReference type="ChEBI" id="CHEBI:57720"/>
        <dbReference type="EC" id="2.4.2.1"/>
    </reaction>
</comment>
<comment type="catalytic activity">
    <reaction evidence="1">
        <text>thymidine + phosphate = 2-deoxy-alpha-D-ribose 1-phosphate + thymine</text>
        <dbReference type="Rhea" id="RHEA:16037"/>
        <dbReference type="ChEBI" id="CHEBI:17748"/>
        <dbReference type="ChEBI" id="CHEBI:17821"/>
        <dbReference type="ChEBI" id="CHEBI:43474"/>
        <dbReference type="ChEBI" id="CHEBI:57259"/>
        <dbReference type="EC" id="2.4.2.2"/>
    </reaction>
</comment>
<comment type="catalytic activity">
    <reaction evidence="1">
        <text>uridine + phosphate = alpha-D-ribose 1-phosphate + uracil</text>
        <dbReference type="Rhea" id="RHEA:24388"/>
        <dbReference type="ChEBI" id="CHEBI:16704"/>
        <dbReference type="ChEBI" id="CHEBI:17568"/>
        <dbReference type="ChEBI" id="CHEBI:43474"/>
        <dbReference type="ChEBI" id="CHEBI:57720"/>
        <dbReference type="EC" id="2.4.2.2"/>
    </reaction>
</comment>
<comment type="catalytic activity">
    <reaction evidence="1">
        <text>xanthosine + phosphate = alpha-D-ribose 1-phosphate + xanthine</text>
        <dbReference type="Rhea" id="RHEA:27638"/>
        <dbReference type="ChEBI" id="CHEBI:17712"/>
        <dbReference type="ChEBI" id="CHEBI:18107"/>
        <dbReference type="ChEBI" id="CHEBI:43474"/>
        <dbReference type="ChEBI" id="CHEBI:57720"/>
        <dbReference type="EC" id="2.4.2.1"/>
    </reaction>
</comment>
<comment type="similarity">
    <text evidence="1">Belongs to the nucleoside phosphorylase PpnP family.</text>
</comment>
<dbReference type="EC" id="2.4.2.1" evidence="1"/>
<dbReference type="EC" id="2.4.2.2" evidence="1"/>
<dbReference type="EMBL" id="CP000970">
    <property type="protein sequence ID" value="ACB19852.1"/>
    <property type="molecule type" value="Genomic_DNA"/>
</dbReference>
<dbReference type="RefSeq" id="WP_000941942.1">
    <property type="nucleotide sequence ID" value="NC_010498.1"/>
</dbReference>
<dbReference type="SMR" id="B1LIS5"/>
<dbReference type="GeneID" id="93777070"/>
<dbReference type="KEGG" id="ecm:EcSMS35_0421"/>
<dbReference type="HOGENOM" id="CLU_157874_0_0_6"/>
<dbReference type="Proteomes" id="UP000007011">
    <property type="component" value="Chromosome"/>
</dbReference>
<dbReference type="GO" id="GO:0005829">
    <property type="term" value="C:cytosol"/>
    <property type="evidence" value="ECO:0007669"/>
    <property type="project" value="TreeGrafter"/>
</dbReference>
<dbReference type="GO" id="GO:0047975">
    <property type="term" value="F:guanosine phosphorylase activity"/>
    <property type="evidence" value="ECO:0007669"/>
    <property type="project" value="UniProtKB-EC"/>
</dbReference>
<dbReference type="GO" id="GO:0004731">
    <property type="term" value="F:purine-nucleoside phosphorylase activity"/>
    <property type="evidence" value="ECO:0007669"/>
    <property type="project" value="UniProtKB-UniRule"/>
</dbReference>
<dbReference type="GO" id="GO:0009032">
    <property type="term" value="F:thymidine phosphorylase activity"/>
    <property type="evidence" value="ECO:0007669"/>
    <property type="project" value="UniProtKB-EC"/>
</dbReference>
<dbReference type="GO" id="GO:0004850">
    <property type="term" value="F:uridine phosphorylase activity"/>
    <property type="evidence" value="ECO:0007669"/>
    <property type="project" value="UniProtKB-EC"/>
</dbReference>
<dbReference type="CDD" id="cd20296">
    <property type="entry name" value="cupin_PpnP-like"/>
    <property type="match status" value="1"/>
</dbReference>
<dbReference type="FunFam" id="2.60.120.10:FF:000016">
    <property type="entry name" value="Pyrimidine/purine nucleoside phosphorylase"/>
    <property type="match status" value="1"/>
</dbReference>
<dbReference type="Gene3D" id="2.60.120.10">
    <property type="entry name" value="Jelly Rolls"/>
    <property type="match status" value="1"/>
</dbReference>
<dbReference type="HAMAP" id="MF_01537">
    <property type="entry name" value="Nucleos_phosphorylase_PpnP"/>
    <property type="match status" value="1"/>
</dbReference>
<dbReference type="InterPro" id="IPR009664">
    <property type="entry name" value="Ppnp"/>
</dbReference>
<dbReference type="InterPro" id="IPR014710">
    <property type="entry name" value="RmlC-like_jellyroll"/>
</dbReference>
<dbReference type="InterPro" id="IPR011051">
    <property type="entry name" value="RmlC_Cupin_sf"/>
</dbReference>
<dbReference type="NCBIfam" id="NF007875">
    <property type="entry name" value="PRK10579.1"/>
    <property type="match status" value="1"/>
</dbReference>
<dbReference type="PANTHER" id="PTHR36540">
    <property type="entry name" value="PYRIMIDINE/PURINE NUCLEOSIDE PHOSPHORYLASE"/>
    <property type="match status" value="1"/>
</dbReference>
<dbReference type="PANTHER" id="PTHR36540:SF1">
    <property type="entry name" value="PYRIMIDINE_PURINE NUCLEOSIDE PHOSPHORYLASE"/>
    <property type="match status" value="1"/>
</dbReference>
<dbReference type="Pfam" id="PF06865">
    <property type="entry name" value="Ppnp"/>
    <property type="match status" value="1"/>
</dbReference>
<dbReference type="SUPFAM" id="SSF51182">
    <property type="entry name" value="RmlC-like cupins"/>
    <property type="match status" value="1"/>
</dbReference>
<protein>
    <recommendedName>
        <fullName evidence="1">Pyrimidine/purine nucleoside phosphorylase</fullName>
        <ecNumber evidence="1">2.4.2.1</ecNumber>
        <ecNumber evidence="1">2.4.2.2</ecNumber>
    </recommendedName>
    <alternativeName>
        <fullName evidence="1">Adenosine phosphorylase</fullName>
    </alternativeName>
    <alternativeName>
        <fullName evidence="1">Cytidine phosphorylase</fullName>
    </alternativeName>
    <alternativeName>
        <fullName evidence="1">Guanosine phosphorylase</fullName>
    </alternativeName>
    <alternativeName>
        <fullName evidence="1">Inosine phosphorylase</fullName>
    </alternativeName>
    <alternativeName>
        <fullName evidence="1">Thymidine phosphorylase</fullName>
    </alternativeName>
    <alternativeName>
        <fullName evidence="1">Uridine phosphorylase</fullName>
    </alternativeName>
    <alternativeName>
        <fullName evidence="1">Xanthosine phosphorylase</fullName>
    </alternativeName>
</protein>
<feature type="chain" id="PRO_1000198659" description="Pyrimidine/purine nucleoside phosphorylase">
    <location>
        <begin position="1"/>
        <end position="94"/>
    </location>
</feature>
<evidence type="ECO:0000255" key="1">
    <source>
        <dbReference type="HAMAP-Rule" id="MF_01537"/>
    </source>
</evidence>
<sequence>MLQSNEYFSGKVKSIGFSSSSTGRASVGVMVEGEYTFSTAEPEEMTVISGALNVLLPDATDWQVYEAGSVFNVPGHSEFHLQVAEPTSYLCRYL</sequence>